<name>HGT1_KLULA</name>
<comment type="function">
    <text>High-affinity glucose transporter.</text>
</comment>
<comment type="subcellular location">
    <subcellularLocation>
        <location>Membrane</location>
        <topology>Multi-pass membrane protein</topology>
    </subcellularLocation>
</comment>
<comment type="similarity">
    <text evidence="2">Belongs to the major facilitator superfamily. Sugar transporter (TC 2.A.1.1) family.</text>
</comment>
<evidence type="ECO:0000255" key="1"/>
<evidence type="ECO:0000305" key="2"/>
<dbReference type="EMBL" id="U22525">
    <property type="protein sequence ID" value="AAC49461.1"/>
    <property type="molecule type" value="Genomic_DNA"/>
</dbReference>
<dbReference type="EMBL" id="CR382121">
    <property type="protein sequence ID" value="CAH03072.1"/>
    <property type="molecule type" value="Genomic_DNA"/>
</dbReference>
<dbReference type="RefSeq" id="XP_451484.1">
    <property type="nucleotide sequence ID" value="XM_451484.1"/>
</dbReference>
<dbReference type="SMR" id="P49374"/>
<dbReference type="STRING" id="284590.P49374"/>
<dbReference type="TCDB" id="2.A.1.1.39">
    <property type="family name" value="the major facilitator superfamily (mfs)"/>
</dbReference>
<dbReference type="GlyCosmos" id="P49374">
    <property type="glycosylation" value="1 site, No reported glycans"/>
</dbReference>
<dbReference type="PaxDb" id="284590-P49374"/>
<dbReference type="KEGG" id="kla:KLLA0_A11110g"/>
<dbReference type="eggNOG" id="KOG0254">
    <property type="taxonomic scope" value="Eukaryota"/>
</dbReference>
<dbReference type="HOGENOM" id="CLU_001265_30_12_1"/>
<dbReference type="InParanoid" id="P49374"/>
<dbReference type="OMA" id="VFFMYPE"/>
<dbReference type="Proteomes" id="UP000000598">
    <property type="component" value="Chromosome A"/>
</dbReference>
<dbReference type="GO" id="GO:0016020">
    <property type="term" value="C:membrane"/>
    <property type="evidence" value="ECO:0007669"/>
    <property type="project" value="UniProtKB-SubCell"/>
</dbReference>
<dbReference type="GO" id="GO:0005351">
    <property type="term" value="F:carbohydrate:proton symporter activity"/>
    <property type="evidence" value="ECO:0007669"/>
    <property type="project" value="TreeGrafter"/>
</dbReference>
<dbReference type="CDD" id="cd17356">
    <property type="entry name" value="MFS_HXT"/>
    <property type="match status" value="1"/>
</dbReference>
<dbReference type="FunFam" id="1.20.1250.20:FF:000026">
    <property type="entry name" value="MFS quinate transporter QutD"/>
    <property type="match status" value="1"/>
</dbReference>
<dbReference type="Gene3D" id="1.20.1250.20">
    <property type="entry name" value="MFS general substrate transporter like domains"/>
    <property type="match status" value="1"/>
</dbReference>
<dbReference type="InterPro" id="IPR020846">
    <property type="entry name" value="MFS_dom"/>
</dbReference>
<dbReference type="InterPro" id="IPR005828">
    <property type="entry name" value="MFS_sugar_transport-like"/>
</dbReference>
<dbReference type="InterPro" id="IPR050360">
    <property type="entry name" value="MFS_Sugar_Transporters"/>
</dbReference>
<dbReference type="InterPro" id="IPR036259">
    <property type="entry name" value="MFS_trans_sf"/>
</dbReference>
<dbReference type="InterPro" id="IPR003663">
    <property type="entry name" value="Sugar/inositol_transpt"/>
</dbReference>
<dbReference type="InterPro" id="IPR005829">
    <property type="entry name" value="Sugar_transporter_CS"/>
</dbReference>
<dbReference type="NCBIfam" id="TIGR00879">
    <property type="entry name" value="SP"/>
    <property type="match status" value="1"/>
</dbReference>
<dbReference type="PANTHER" id="PTHR48022:SF7">
    <property type="entry name" value="MAJOR FACILITATOR SUPERFAMILY (MFS) PROFILE DOMAIN-CONTAINING PROTEIN-RELATED"/>
    <property type="match status" value="1"/>
</dbReference>
<dbReference type="PANTHER" id="PTHR48022">
    <property type="entry name" value="PLASTIDIC GLUCOSE TRANSPORTER 4"/>
    <property type="match status" value="1"/>
</dbReference>
<dbReference type="Pfam" id="PF00083">
    <property type="entry name" value="Sugar_tr"/>
    <property type="match status" value="1"/>
</dbReference>
<dbReference type="PRINTS" id="PR00171">
    <property type="entry name" value="SUGRTRNSPORT"/>
</dbReference>
<dbReference type="SUPFAM" id="SSF103473">
    <property type="entry name" value="MFS general substrate transporter"/>
    <property type="match status" value="1"/>
</dbReference>
<dbReference type="PROSITE" id="PS50850">
    <property type="entry name" value="MFS"/>
    <property type="match status" value="1"/>
</dbReference>
<dbReference type="PROSITE" id="PS00216">
    <property type="entry name" value="SUGAR_TRANSPORT_1"/>
    <property type="match status" value="1"/>
</dbReference>
<dbReference type="PROSITE" id="PS00217">
    <property type="entry name" value="SUGAR_TRANSPORT_2"/>
    <property type="match status" value="1"/>
</dbReference>
<gene>
    <name type="primary">HGT1</name>
    <name type="ordered locus">KLLA0A11110g</name>
</gene>
<proteinExistence type="inferred from homology"/>
<organism>
    <name type="scientific">Kluyveromyces lactis (strain ATCC 8585 / CBS 2359 / DSM 70799 / NBRC 1267 / NRRL Y-1140 / WM37)</name>
    <name type="common">Yeast</name>
    <name type="synonym">Candida sphaerica</name>
    <dbReference type="NCBI Taxonomy" id="284590"/>
    <lineage>
        <taxon>Eukaryota</taxon>
        <taxon>Fungi</taxon>
        <taxon>Dikarya</taxon>
        <taxon>Ascomycota</taxon>
        <taxon>Saccharomycotina</taxon>
        <taxon>Saccharomycetes</taxon>
        <taxon>Saccharomycetales</taxon>
        <taxon>Saccharomycetaceae</taxon>
        <taxon>Kluyveromyces</taxon>
    </lineage>
</organism>
<feature type="chain" id="PRO_0000050418" description="High-affinity glucose transporter">
    <location>
        <begin position="1"/>
        <end position="551"/>
    </location>
</feature>
<feature type="topological domain" description="Cytoplasmic" evidence="1">
    <location>
        <begin position="1"/>
        <end position="27"/>
    </location>
</feature>
<feature type="transmembrane region" description="Helical; Name=1" evidence="1">
    <location>
        <begin position="28"/>
        <end position="48"/>
    </location>
</feature>
<feature type="topological domain" description="Extracellular" evidence="1">
    <location>
        <begin position="49"/>
        <end position="70"/>
    </location>
</feature>
<feature type="transmembrane region" description="Helical; Name=2" evidence="1">
    <location>
        <begin position="71"/>
        <end position="91"/>
    </location>
</feature>
<feature type="topological domain" description="Cytoplasmic" evidence="1">
    <location>
        <begin position="92"/>
        <end position="98"/>
    </location>
</feature>
<feature type="transmembrane region" description="Helical; Name=3" evidence="1">
    <location>
        <begin position="99"/>
        <end position="119"/>
    </location>
</feature>
<feature type="topological domain" description="Extracellular" evidence="1">
    <location>
        <begin position="120"/>
        <end position="123"/>
    </location>
</feature>
<feature type="transmembrane region" description="Helical; Name=4" evidence="1">
    <location>
        <begin position="124"/>
        <end position="144"/>
    </location>
</feature>
<feature type="topological domain" description="Cytoplasmic" evidence="1">
    <location>
        <begin position="145"/>
        <end position="155"/>
    </location>
</feature>
<feature type="transmembrane region" description="Helical; Name=5" evidence="1">
    <location>
        <begin position="156"/>
        <end position="176"/>
    </location>
</feature>
<feature type="topological domain" description="Extracellular" evidence="1">
    <location>
        <begin position="177"/>
        <end position="190"/>
    </location>
</feature>
<feature type="transmembrane region" description="Helical; Name=6" evidence="1">
    <location>
        <begin position="191"/>
        <end position="211"/>
    </location>
</feature>
<feature type="topological domain" description="Cytoplasmic" evidence="1">
    <location>
        <begin position="212"/>
        <end position="289"/>
    </location>
</feature>
<feature type="transmembrane region" description="Helical; Name=7" evidence="1">
    <location>
        <begin position="290"/>
        <end position="310"/>
    </location>
</feature>
<feature type="topological domain" description="Extracellular" evidence="1">
    <location>
        <begin position="311"/>
        <end position="315"/>
    </location>
</feature>
<feature type="transmembrane region" description="Helical; Name=8" evidence="1">
    <location>
        <begin position="316"/>
        <end position="336"/>
    </location>
</feature>
<feature type="topological domain" description="Cytoplasmic" evidence="1">
    <location>
        <begin position="337"/>
        <end position="343"/>
    </location>
</feature>
<feature type="transmembrane region" description="Helical; Name=9" evidence="1">
    <location>
        <begin position="344"/>
        <end position="364"/>
    </location>
</feature>
<feature type="topological domain" description="Extracellular" evidence="1">
    <location>
        <begin position="365"/>
        <end position="395"/>
    </location>
</feature>
<feature type="transmembrane region" description="Helical; Name=10" evidence="1">
    <location>
        <begin position="396"/>
        <end position="416"/>
    </location>
</feature>
<feature type="topological domain" description="Cytoplasmic" evidence="1">
    <location>
        <begin position="417"/>
        <end position="432"/>
    </location>
</feature>
<feature type="transmembrane region" description="Helical; Name=11" evidence="1">
    <location>
        <begin position="433"/>
        <end position="453"/>
    </location>
</feature>
<feature type="topological domain" description="Extracellular" evidence="1">
    <location>
        <begin position="454"/>
        <end position="459"/>
    </location>
</feature>
<feature type="transmembrane region" description="Helical; Name=12" evidence="1">
    <location>
        <begin position="460"/>
        <end position="480"/>
    </location>
</feature>
<feature type="topological domain" description="Cytoplasmic" evidence="1">
    <location>
        <begin position="481"/>
        <end position="551"/>
    </location>
</feature>
<feature type="glycosylation site" description="N-linked (GlcNAc...) asparagine" evidence="1">
    <location>
        <position position="388"/>
    </location>
</feature>
<keyword id="KW-0325">Glycoprotein</keyword>
<keyword id="KW-0472">Membrane</keyword>
<keyword id="KW-1185">Reference proteome</keyword>
<keyword id="KW-0762">Sugar transport</keyword>
<keyword id="KW-0812">Transmembrane</keyword>
<keyword id="KW-1133">Transmembrane helix</keyword>
<keyword id="KW-0813">Transport</keyword>
<reference key="1">
    <citation type="journal article" date="1996" name="J. Bacteriol.">
        <title>Glucose uptake in Kluyveromyces lactis: role of the HGT1 gene in glucose transport.</title>
        <authorList>
            <person name="Billard P."/>
            <person name="Menart S."/>
            <person name="Blaisonneau J."/>
            <person name="Bolotin-Fukuhara M."/>
            <person name="Fukuhara H."/>
            <person name="Wesolowski-Louvel M."/>
        </authorList>
    </citation>
    <scope>NUCLEOTIDE SEQUENCE [GENOMIC DNA]</scope>
    <source>
        <strain>ATCC 76492 / CBS 2359/152 / CLIB 210</strain>
    </source>
</reference>
<reference key="2">
    <citation type="journal article" date="2004" name="Nature">
        <title>Genome evolution in yeasts.</title>
        <authorList>
            <person name="Dujon B."/>
            <person name="Sherman D."/>
            <person name="Fischer G."/>
            <person name="Durrens P."/>
            <person name="Casaregola S."/>
            <person name="Lafontaine I."/>
            <person name="de Montigny J."/>
            <person name="Marck C."/>
            <person name="Neuveglise C."/>
            <person name="Talla E."/>
            <person name="Goffard N."/>
            <person name="Frangeul L."/>
            <person name="Aigle M."/>
            <person name="Anthouard V."/>
            <person name="Babour A."/>
            <person name="Barbe V."/>
            <person name="Barnay S."/>
            <person name="Blanchin S."/>
            <person name="Beckerich J.-M."/>
            <person name="Beyne E."/>
            <person name="Bleykasten C."/>
            <person name="Boisrame A."/>
            <person name="Boyer J."/>
            <person name="Cattolico L."/>
            <person name="Confanioleri F."/>
            <person name="de Daruvar A."/>
            <person name="Despons L."/>
            <person name="Fabre E."/>
            <person name="Fairhead C."/>
            <person name="Ferry-Dumazet H."/>
            <person name="Groppi A."/>
            <person name="Hantraye F."/>
            <person name="Hennequin C."/>
            <person name="Jauniaux N."/>
            <person name="Joyet P."/>
            <person name="Kachouri R."/>
            <person name="Kerrest A."/>
            <person name="Koszul R."/>
            <person name="Lemaire M."/>
            <person name="Lesur I."/>
            <person name="Ma L."/>
            <person name="Muller H."/>
            <person name="Nicaud J.-M."/>
            <person name="Nikolski M."/>
            <person name="Oztas S."/>
            <person name="Ozier-Kalogeropoulos O."/>
            <person name="Pellenz S."/>
            <person name="Potier S."/>
            <person name="Richard G.-F."/>
            <person name="Straub M.-L."/>
            <person name="Suleau A."/>
            <person name="Swennen D."/>
            <person name="Tekaia F."/>
            <person name="Wesolowski-Louvel M."/>
            <person name="Westhof E."/>
            <person name="Wirth B."/>
            <person name="Zeniou-Meyer M."/>
            <person name="Zivanovic Y."/>
            <person name="Bolotin-Fukuhara M."/>
            <person name="Thierry A."/>
            <person name="Bouchier C."/>
            <person name="Caudron B."/>
            <person name="Scarpelli C."/>
            <person name="Gaillardin C."/>
            <person name="Weissenbach J."/>
            <person name="Wincker P."/>
            <person name="Souciet J.-L."/>
        </authorList>
    </citation>
    <scope>NUCLEOTIDE SEQUENCE [LARGE SCALE GENOMIC DNA]</scope>
    <source>
        <strain>ATCC 8585 / CBS 2359 / DSM 70799 / NBRC 1267 / NRRL Y-1140 / WM37</strain>
    </source>
</reference>
<sequence length="551" mass="60761">MSLKNWLLLRDIQYEGTFYKKFPHVYNIYVIGFIACISGLMFGFDIASMSSMIGTDVYKDYFSNPDSLTYGGITASMAGGSFLGSLISPNFSDAFGRKVSLHICAALWIIGAILQCAAQDQAMLIVGRVISGMGIGFGSSAAPVYCSEISPPKIRGTISGLFQFSVTVGIMVLFYIGYGCHFIDGAAAFRITWGLQMVPGLILMVGVFFIPESPRWLANHDRWEETSLIVANIVANGDVNNEQVRFQLEEIKEQVIIDSAAKNFGYKDLFRKKTLPKTIVGVSAQMWQQLCGMNVMMYYIVYIFNMAGYTGNTNLVASSIQYVLNVVMTIPALFLIDKFGRRPVLIIGGIFMFTWLFSVAGILATYSVPAPGGVNGDDTVTIQIPSENTSAANGVIASSYLFVCFFAPTWGIGIWIYCSEIFNNMERAKGSALSAATNWAFNFALAMFVPSAFKNISWKTYIIFGVFSVALTIQTFFMFPETKGKTLEEIDQMWVDNIPAWRTANYIPQLPIVKDEEGNKLGLLGNPQHLEDVHSNEKGLLDRSDSASNSN</sequence>
<protein>
    <recommendedName>
        <fullName>High-affinity glucose transporter</fullName>
    </recommendedName>
</protein>
<accession>P49374</accession>